<reference key="1">
    <citation type="journal article" date="2009" name="Biochimie">
        <title>Molecular cloning and nucleotide sequence analysis of genes from a cDNA library of the scorpion Tityus discrepans.</title>
        <authorList>
            <person name="D'Suze G."/>
            <person name="Schwartz E.F."/>
            <person name="Garcia-Gomez B.I."/>
            <person name="Sevcik C."/>
            <person name="Possani L.D."/>
        </authorList>
    </citation>
    <scope>NUCLEOTIDE SEQUENCE [MRNA]</scope>
    <source>
        <tissue>Venom gland</tissue>
    </source>
</reference>
<proteinExistence type="inferred from homology"/>
<accession>P0CF77</accession>
<sequence>RYCPRNPEACYNYCLRTGRPGGYCGGRSRITCFCFR</sequence>
<keyword id="KW-0044">Antibiotic</keyword>
<keyword id="KW-0929">Antimicrobial</keyword>
<keyword id="KW-0211">Defensin</keyword>
<keyword id="KW-1015">Disulfide bond</keyword>
<keyword id="KW-0964">Secreted</keyword>
<comment type="function">
    <text evidence="1">Antibacterial peptide mostly active against Gram-positive bacteria.</text>
</comment>
<comment type="subcellular location">
    <subcellularLocation>
        <location evidence="5">Secreted</location>
    </subcellularLocation>
</comment>
<comment type="tissue specificity">
    <text evidence="5">Expressed by the venom gland.</text>
</comment>
<comment type="similarity">
    <text evidence="4">Belongs to the invertebrate defensin family.</text>
</comment>
<name>DEF_TITDI</name>
<dbReference type="SMR" id="P0CF77"/>
<dbReference type="GO" id="GO:0005576">
    <property type="term" value="C:extracellular region"/>
    <property type="evidence" value="ECO:0007669"/>
    <property type="project" value="UniProtKB-SubCell"/>
</dbReference>
<dbReference type="GO" id="GO:0042742">
    <property type="term" value="P:defense response to bacterium"/>
    <property type="evidence" value="ECO:0007669"/>
    <property type="project" value="UniProtKB-KW"/>
</dbReference>
<dbReference type="InterPro" id="IPR001542">
    <property type="entry name" value="Defensin_invertebrate/fungal"/>
</dbReference>
<dbReference type="InterPro" id="IPR036574">
    <property type="entry name" value="Scorpion_toxin-like_sf"/>
</dbReference>
<dbReference type="Pfam" id="PF01097">
    <property type="entry name" value="Defensin_2"/>
    <property type="match status" value="1"/>
</dbReference>
<dbReference type="SUPFAM" id="SSF57095">
    <property type="entry name" value="Scorpion toxin-like"/>
    <property type="match status" value="1"/>
</dbReference>
<feature type="chain" id="PRO_0000394021" description="Tddefensin" evidence="5">
    <location>
        <begin position="1"/>
        <end position="36"/>
    </location>
</feature>
<feature type="disulfide bond" evidence="2">
    <location>
        <begin position="3"/>
        <end position="24"/>
    </location>
</feature>
<feature type="disulfide bond" evidence="2">
    <location>
        <begin position="10"/>
        <end position="32"/>
    </location>
</feature>
<feature type="disulfide bond" evidence="2">
    <location>
        <begin position="14"/>
        <end position="34"/>
    </location>
</feature>
<protein>
    <recommendedName>
        <fullName evidence="3">Tddefensin</fullName>
    </recommendedName>
</protein>
<organism>
    <name type="scientific">Tityus discrepans</name>
    <name type="common">Venezuelan scorpion</name>
    <dbReference type="NCBI Taxonomy" id="57059"/>
    <lineage>
        <taxon>Eukaryota</taxon>
        <taxon>Metazoa</taxon>
        <taxon>Ecdysozoa</taxon>
        <taxon>Arthropoda</taxon>
        <taxon>Chelicerata</taxon>
        <taxon>Arachnida</taxon>
        <taxon>Scorpiones</taxon>
        <taxon>Buthida</taxon>
        <taxon>Buthoidea</taxon>
        <taxon>Buthidae</taxon>
        <taxon>Tityus</taxon>
    </lineage>
</organism>
<evidence type="ECO:0000250" key="1"/>
<evidence type="ECO:0000250" key="2">
    <source>
        <dbReference type="UniProtKB" id="A0A384E0Y8"/>
    </source>
</evidence>
<evidence type="ECO:0000303" key="3">
    <source>
    </source>
</evidence>
<evidence type="ECO:0000305" key="4"/>
<evidence type="ECO:0000305" key="5">
    <source>
    </source>
</evidence>